<accession>Q865S0</accession>
<organism>
    <name type="scientific">Canis lupus familiaris</name>
    <name type="common">Dog</name>
    <name type="synonym">Canis familiaris</name>
    <dbReference type="NCBI Taxonomy" id="9615"/>
    <lineage>
        <taxon>Eukaryota</taxon>
        <taxon>Metazoa</taxon>
        <taxon>Chordata</taxon>
        <taxon>Craniata</taxon>
        <taxon>Vertebrata</taxon>
        <taxon>Euteleostomi</taxon>
        <taxon>Mammalia</taxon>
        <taxon>Eutheria</taxon>
        <taxon>Laurasiatheria</taxon>
        <taxon>Carnivora</taxon>
        <taxon>Caniformia</taxon>
        <taxon>Canidae</taxon>
        <taxon>Canis</taxon>
    </lineage>
</organism>
<protein>
    <recommendedName>
        <fullName>Receptor-binding cancer antigen expressed on SiSo cells</fullName>
    </recommendedName>
    <alternativeName>
        <fullName>Cancer-associated surface antigen RCAS1</fullName>
    </alternativeName>
    <alternativeName>
        <fullName>Estrogen receptor-binding fragment-associated gene 9 protein</fullName>
    </alternativeName>
</protein>
<evidence type="ECO:0000250" key="1"/>
<evidence type="ECO:0000250" key="2">
    <source>
        <dbReference type="UniProtKB" id="O00559"/>
    </source>
</evidence>
<evidence type="ECO:0000255" key="3"/>
<evidence type="ECO:0000256" key="4">
    <source>
        <dbReference type="SAM" id="MobiDB-lite"/>
    </source>
</evidence>
<name>RCAS1_CANLF</name>
<sequence>MAITQFRLFKVCTCLATVFSFLKRLICRSGRGRKLSGDQITLPTTVDYSSVPKQTDVEEWTSWDEDAPTSVKIEGGNGNVATQQNALEQLEPDYFKDMTPTIRKTQKIIIKKREPLNFGIPDGSTGFSSRLAATQDMPFIHQSPELGDLDTWQENTNAWEEEEDAAWQAEEVLRQQKIADREKRAAEQQRKRMEKEAQRLMRKEQNKIGVKLS</sequence>
<comment type="function">
    <text evidence="1">May participate in suppression of cell proliferation and induces apoptotic cell death through activation of interleukin-1-beta converting enzyme (ICE)-like proteases.</text>
</comment>
<comment type="subunit">
    <text evidence="1">Homodimer.</text>
</comment>
<comment type="subcellular location">
    <subcellularLocation>
        <location>Golgi apparatus membrane</location>
        <topology>Single-pass type III membrane protein</topology>
    </subcellularLocation>
    <text evidence="1">Predominantly located in the Golgi.</text>
</comment>
<comment type="domain">
    <text evidence="1">The coiled coil domain is necessary for the homodimerization.</text>
</comment>
<reference key="1">
    <citation type="journal article" date="2003" name="J. Vet. Med. Sci.">
        <title>Molecular cloning of canine RCAS1 cDNA.</title>
        <authorList>
            <person name="Okamura Y."/>
            <person name="Ma Z."/>
            <person name="Khatlani T.S."/>
            <person name="Okuda M."/>
            <person name="Une S."/>
            <person name="Nakaichi M."/>
            <person name="Taura Y."/>
        </authorList>
    </citation>
    <scope>NUCLEOTIDE SEQUENCE [MRNA]</scope>
    <source>
        <tissue>Mammary tumor</tissue>
    </source>
</reference>
<dbReference type="EMBL" id="AB083366">
    <property type="protein sequence ID" value="BAC20645.1"/>
    <property type="molecule type" value="mRNA"/>
</dbReference>
<dbReference type="RefSeq" id="NP_001002996.1">
    <property type="nucleotide sequence ID" value="NM_001002996.1"/>
</dbReference>
<dbReference type="SMR" id="Q865S0"/>
<dbReference type="FunCoup" id="Q865S0">
    <property type="interactions" value="658"/>
</dbReference>
<dbReference type="STRING" id="9615.ENSCAFP00000001047"/>
<dbReference type="SwissPalm" id="Q865S0"/>
<dbReference type="PaxDb" id="9612-ENSCAFP00000001047"/>
<dbReference type="GeneID" id="403500"/>
<dbReference type="KEGG" id="cfa:403500"/>
<dbReference type="CTD" id="9166"/>
<dbReference type="eggNOG" id="ENOG502QSN4">
    <property type="taxonomic scope" value="Eukaryota"/>
</dbReference>
<dbReference type="InParanoid" id="Q865S0"/>
<dbReference type="OrthoDB" id="10017216at2759"/>
<dbReference type="Proteomes" id="UP000002254">
    <property type="component" value="Unplaced"/>
</dbReference>
<dbReference type="Proteomes" id="UP000694429">
    <property type="component" value="Unplaced"/>
</dbReference>
<dbReference type="Proteomes" id="UP000694542">
    <property type="component" value="Unplaced"/>
</dbReference>
<dbReference type="Proteomes" id="UP000805418">
    <property type="component" value="Unplaced"/>
</dbReference>
<dbReference type="GO" id="GO:0000139">
    <property type="term" value="C:Golgi membrane"/>
    <property type="evidence" value="ECO:0007669"/>
    <property type="project" value="UniProtKB-SubCell"/>
</dbReference>
<dbReference type="GO" id="GO:0030141">
    <property type="term" value="C:secretory granule"/>
    <property type="evidence" value="ECO:0000318"/>
    <property type="project" value="GO_Central"/>
</dbReference>
<dbReference type="GO" id="GO:0006915">
    <property type="term" value="P:apoptotic process"/>
    <property type="evidence" value="ECO:0007669"/>
    <property type="project" value="UniProtKB-KW"/>
</dbReference>
<dbReference type="InterPro" id="IPR017025">
    <property type="entry name" value="Cancer-assoc_antigen_RCAS1"/>
</dbReference>
<dbReference type="PANTHER" id="PTHR15208:SF2">
    <property type="entry name" value="RECEPTOR-BINDING CANCER ANTIGEN EXPRESSED ON SISO CELLS"/>
    <property type="match status" value="1"/>
</dbReference>
<dbReference type="PANTHER" id="PTHR15208">
    <property type="entry name" value="RECEPTOR-BINDING CANCER ANTIGEN EXPRESSED ON SISO CELLS CANCER ASSOCIATED SURFACE ANTIGEN RCAS1 ESTROGEN RECEPTOR-BINDING FRAGMENT- ASSOCIATED GENE 9 PROTEIN"/>
    <property type="match status" value="1"/>
</dbReference>
<dbReference type="PIRSF" id="PIRSF034247">
    <property type="entry name" value="RCAS1"/>
    <property type="match status" value="1"/>
</dbReference>
<gene>
    <name type="primary">EBAG9</name>
    <name type="synonym">RCAS1</name>
</gene>
<proteinExistence type="evidence at transcript level"/>
<feature type="chain" id="PRO_0000097194" description="Receptor-binding cancer antigen expressed on SiSo cells">
    <location>
        <begin position="1"/>
        <end position="213"/>
    </location>
</feature>
<feature type="topological domain" description="Extracellular" evidence="3">
    <location>
        <begin position="1"/>
        <end position="6"/>
    </location>
</feature>
<feature type="transmembrane region" description="Helical; Signal-anchor for type III membrane protein" evidence="3">
    <location>
        <begin position="7"/>
        <end position="27"/>
    </location>
</feature>
<feature type="topological domain" description="Cytoplasmic" evidence="3">
    <location>
        <begin position="28"/>
        <end position="213"/>
    </location>
</feature>
<feature type="region of interest" description="Disordered" evidence="4">
    <location>
        <begin position="179"/>
        <end position="213"/>
    </location>
</feature>
<feature type="coiled-coil region" evidence="3">
    <location>
        <begin position="163"/>
        <end position="211"/>
    </location>
</feature>
<feature type="compositionally biased region" description="Basic and acidic residues" evidence="4">
    <location>
        <begin position="179"/>
        <end position="206"/>
    </location>
</feature>
<feature type="modified residue" description="Phosphoserine" evidence="2">
    <location>
        <position position="36"/>
    </location>
</feature>
<feature type="modified residue" description="Phosphothreonine" evidence="2">
    <location>
        <position position="41"/>
    </location>
</feature>
<feature type="modified residue" description="Phosphotyrosine" evidence="2">
    <location>
        <position position="94"/>
    </location>
</feature>
<keyword id="KW-0053">Apoptosis</keyword>
<keyword id="KW-0175">Coiled coil</keyword>
<keyword id="KW-0333">Golgi apparatus</keyword>
<keyword id="KW-0472">Membrane</keyword>
<keyword id="KW-0597">Phosphoprotein</keyword>
<keyword id="KW-1185">Reference proteome</keyword>
<keyword id="KW-0735">Signal-anchor</keyword>
<keyword id="KW-0812">Transmembrane</keyword>
<keyword id="KW-1133">Transmembrane helix</keyword>